<sequence length="224" mass="24810">MESGAYGAAKAGGSFDLRRFLTQPQVVARAVCLVFALIVFSCIYGEGYSNAHESKQMYCVFNRNEDACRYGSAIGVLAFLASAFFLVVDAYFPQISNATDRKYLVIGDLLFSALWTFLWFVGFCFLTNQWAVTNPKDVLVGADSVRAAITFSFFSIFSWGVLASLAYQRYKAGVDDFIQNYVDPTPDPNTAYASYPGASVDNYQQPPFTQNAETTEGYQPPPVY</sequence>
<proteinExistence type="evidence at protein level"/>
<comment type="function">
    <text evidence="1">May play a role in regulated exocytosis. In neuronal cells, modulates the localization of synaptophysin/SYP into synaptic-like microvesicles and may therefore play a role in the formation and/or the maturation of this vesicles. May also play a role in GLUT4 storage and transport to the plasma membrane.</text>
</comment>
<comment type="function">
    <text evidence="4">(Microbial infection) May play a role in the assembly of cytoplasmic inclusion bodies required for SFTS phlebovirus replication.</text>
</comment>
<comment type="subunit">
    <text evidence="4">(Microbial infection) Interacts with SFTS phlebovirus protein NSs; may be involved in virus replication.</text>
</comment>
<comment type="interaction">
    <interactant intactId="EBI-2826419">
        <id>O43760</id>
    </interactant>
    <interactant intactId="EBI-8657660">
        <id>Q6AZY7</id>
        <label>SCARA3</label>
    </interactant>
    <organismsDiffer>false</organismsDiffer>
    <experiments>3</experiments>
</comment>
<comment type="subcellular location">
    <subcellularLocation>
        <location evidence="1">Cytoplasmic vesicle membrane</location>
        <topology evidence="2">Multi-pass membrane protein</topology>
    </subcellularLocation>
    <subcellularLocation>
        <location evidence="1">Cytoplasmic vesicle</location>
        <location evidence="1">Secretory vesicle</location>
        <location evidence="1">Synaptic vesicle membrane</location>
        <topology evidence="2">Multi-pass membrane protein</topology>
    </subcellularLocation>
    <text evidence="1">Localizes to cytoplasmic vesicles associated with the recycling endosomes.</text>
</comment>
<comment type="subcellular location">
    <subcellularLocation>
        <location>Lipid droplet</location>
    </subcellularLocation>
    <text evidence="4">(Microbial infection) Upon SFTS phlebovirus infection, the protein localizes in lipid droplets and inclusion bodies.</text>
</comment>
<comment type="alternative products">
    <event type="alternative splicing"/>
    <isoform>
        <id>O43760-1</id>
        <name>1</name>
        <sequence type="displayed"/>
    </isoform>
    <isoform>
        <id>O43760-2</id>
        <name>2</name>
        <sequence type="described" ref="VSP_056179"/>
    </isoform>
</comment>
<comment type="tissue specificity">
    <text evidence="5">Ubiquitous; low expression in brain.</text>
</comment>
<comment type="induction">
    <text evidence="4">(Microbial infection) Up-regulated upon SFTS phlebovirus infection (at protein level).</text>
</comment>
<comment type="PTM">
    <text evidence="1">May be tyrosine phosphorylated by Src.</text>
</comment>
<comment type="similarity">
    <text evidence="8">Belongs to the synaptogyrin family.</text>
</comment>
<accession>O43760</accession>
<accession>O43762</accession>
<accession>Q3KQZ2</accession>
<accession>Q658S7</accession>
<organism>
    <name type="scientific">Homo sapiens</name>
    <name type="common">Human</name>
    <dbReference type="NCBI Taxonomy" id="9606"/>
    <lineage>
        <taxon>Eukaryota</taxon>
        <taxon>Metazoa</taxon>
        <taxon>Chordata</taxon>
        <taxon>Craniata</taxon>
        <taxon>Vertebrata</taxon>
        <taxon>Euteleostomi</taxon>
        <taxon>Mammalia</taxon>
        <taxon>Eutheria</taxon>
        <taxon>Euarchontoglires</taxon>
        <taxon>Primates</taxon>
        <taxon>Haplorrhini</taxon>
        <taxon>Catarrhini</taxon>
        <taxon>Hominidae</taxon>
        <taxon>Homo</taxon>
    </lineage>
</organism>
<dbReference type="EMBL" id="AJ002308">
    <property type="protein sequence ID" value="CAA05325.1"/>
    <property type="molecule type" value="mRNA"/>
</dbReference>
<dbReference type="EMBL" id="AJ002310">
    <property type="protein sequence ID" value="CAA05327.1"/>
    <property type="molecule type" value="Genomic_DNA"/>
</dbReference>
<dbReference type="EMBL" id="AJ002312">
    <property type="protein sequence ID" value="CAA05327.1"/>
    <property type="status" value="JOINED"/>
    <property type="molecule type" value="Genomic_DNA"/>
</dbReference>
<dbReference type="EMBL" id="AY358916">
    <property type="protein sequence ID" value="AAQ89275.1"/>
    <property type="molecule type" value="mRNA"/>
</dbReference>
<dbReference type="EMBL" id="AC021593">
    <property type="status" value="NOT_ANNOTATED_CDS"/>
    <property type="molecule type" value="Genomic_DNA"/>
</dbReference>
<dbReference type="EMBL" id="BC000407">
    <property type="protein sequence ID" value="AAH00407.1"/>
    <property type="molecule type" value="mRNA"/>
</dbReference>
<dbReference type="EMBL" id="BC029755">
    <property type="protein sequence ID" value="AAH29755.1"/>
    <property type="molecule type" value="mRNA"/>
</dbReference>
<dbReference type="EMBL" id="BC105992">
    <property type="protein sequence ID" value="AAI05993.1"/>
    <property type="molecule type" value="mRNA"/>
</dbReference>
<dbReference type="EMBL" id="AL833010">
    <property type="protein sequence ID" value="CAH56291.1"/>
    <property type="molecule type" value="mRNA"/>
</dbReference>
<dbReference type="CCDS" id="CCDS11753.1">
    <molecule id="O43760-1"/>
</dbReference>
<dbReference type="CCDS" id="CCDS86641.1">
    <molecule id="O43760-2"/>
</dbReference>
<dbReference type="RefSeq" id="NP_001307452.1">
    <property type="nucleotide sequence ID" value="NM_001320523.1"/>
</dbReference>
<dbReference type="RefSeq" id="NP_001350707.1">
    <molecule id="O43760-2"/>
    <property type="nucleotide sequence ID" value="NM_001363778.1"/>
</dbReference>
<dbReference type="RefSeq" id="NP_004701.1">
    <molecule id="O43760-1"/>
    <property type="nucleotide sequence ID" value="NM_004710.7"/>
</dbReference>
<dbReference type="RefSeq" id="XP_005257849.1">
    <property type="nucleotide sequence ID" value="XM_005257792.3"/>
</dbReference>
<dbReference type="SMR" id="O43760"/>
<dbReference type="BioGRID" id="114591">
    <property type="interactions" value="108"/>
</dbReference>
<dbReference type="FunCoup" id="O43760">
    <property type="interactions" value="829"/>
</dbReference>
<dbReference type="IntAct" id="O43760">
    <property type="interactions" value="64"/>
</dbReference>
<dbReference type="MINT" id="O43760"/>
<dbReference type="STRING" id="9606.ENSP00000467600"/>
<dbReference type="GlyGen" id="O43760">
    <property type="glycosylation" value="2 sites, 2 O-linked glycans (1 site)"/>
</dbReference>
<dbReference type="iPTMnet" id="O43760"/>
<dbReference type="PhosphoSitePlus" id="O43760"/>
<dbReference type="SwissPalm" id="O43760"/>
<dbReference type="BioMuta" id="SYNGR2"/>
<dbReference type="jPOST" id="O43760"/>
<dbReference type="MassIVE" id="O43760"/>
<dbReference type="PaxDb" id="9606-ENSP00000225777"/>
<dbReference type="PeptideAtlas" id="O43760"/>
<dbReference type="ProteomicsDB" id="49153">
    <molecule id="O43760-1"/>
</dbReference>
<dbReference type="Pumba" id="O43760"/>
<dbReference type="TopDownProteomics" id="O43760-1">
    <molecule id="O43760-1"/>
</dbReference>
<dbReference type="Antibodypedia" id="32546">
    <property type="antibodies" value="254 antibodies from 30 providers"/>
</dbReference>
<dbReference type="DNASU" id="9144"/>
<dbReference type="Ensembl" id="ENST00000225777.8">
    <molecule id="O43760-1"/>
    <property type="protein sequence ID" value="ENSP00000225777.2"/>
    <property type="gene ID" value="ENSG00000108639.8"/>
</dbReference>
<dbReference type="Ensembl" id="ENST00000585591.5">
    <molecule id="O43760-1"/>
    <property type="protein sequence ID" value="ENSP00000465678.1"/>
    <property type="gene ID" value="ENSG00000108639.8"/>
</dbReference>
<dbReference type="Ensembl" id="ENST00000588282.5">
    <molecule id="O43760-2"/>
    <property type="protein sequence ID" value="ENSP00000467600.1"/>
    <property type="gene ID" value="ENSG00000108639.8"/>
</dbReference>
<dbReference type="GeneID" id="9144"/>
<dbReference type="KEGG" id="hsa:9144"/>
<dbReference type="MANE-Select" id="ENST00000225777.8">
    <property type="protein sequence ID" value="ENSP00000225777.2"/>
    <property type="RefSeq nucleotide sequence ID" value="NM_004710.7"/>
    <property type="RefSeq protein sequence ID" value="NP_004701.1"/>
</dbReference>
<dbReference type="UCSC" id="uc002jut.4">
    <molecule id="O43760-1"/>
    <property type="organism name" value="human"/>
</dbReference>
<dbReference type="AGR" id="HGNC:11499"/>
<dbReference type="CTD" id="9144"/>
<dbReference type="DisGeNET" id="9144"/>
<dbReference type="GeneCards" id="SYNGR2"/>
<dbReference type="HGNC" id="HGNC:11499">
    <property type="gene designation" value="SYNGR2"/>
</dbReference>
<dbReference type="HPA" id="ENSG00000108639">
    <property type="expression patterns" value="Low tissue specificity"/>
</dbReference>
<dbReference type="MIM" id="603926">
    <property type="type" value="gene"/>
</dbReference>
<dbReference type="neXtProt" id="NX_O43760"/>
<dbReference type="OpenTargets" id="ENSG00000108639"/>
<dbReference type="PharmGKB" id="PA36281"/>
<dbReference type="VEuPathDB" id="HostDB:ENSG00000108639"/>
<dbReference type="eggNOG" id="KOG4016">
    <property type="taxonomic scope" value="Eukaryota"/>
</dbReference>
<dbReference type="GeneTree" id="ENSGT00950000182935"/>
<dbReference type="HOGENOM" id="CLU_079186_1_0_1"/>
<dbReference type="InParanoid" id="O43760"/>
<dbReference type="OMA" id="MQSSAYG"/>
<dbReference type="OrthoDB" id="10041611at2759"/>
<dbReference type="PAN-GO" id="O43760">
    <property type="GO annotations" value="2 GO annotations based on evolutionary models"/>
</dbReference>
<dbReference type="PhylomeDB" id="O43760"/>
<dbReference type="TreeFam" id="TF320995"/>
<dbReference type="PathwayCommons" id="O43760"/>
<dbReference type="SignaLink" id="O43760"/>
<dbReference type="BioGRID-ORCS" id="9144">
    <property type="hits" value="16 hits in 1155 CRISPR screens"/>
</dbReference>
<dbReference type="ChiTaRS" id="SYNGR2">
    <property type="organism name" value="human"/>
</dbReference>
<dbReference type="GenomeRNAi" id="9144"/>
<dbReference type="Pharos" id="O43760">
    <property type="development level" value="Tbio"/>
</dbReference>
<dbReference type="PRO" id="PR:O43760"/>
<dbReference type="Proteomes" id="UP000005640">
    <property type="component" value="Chromosome 17"/>
</dbReference>
<dbReference type="RNAct" id="O43760">
    <property type="molecule type" value="protein"/>
</dbReference>
<dbReference type="Bgee" id="ENSG00000108639">
    <property type="expression patterns" value="Expressed in mucosa of transverse colon and 201 other cell types or tissues"/>
</dbReference>
<dbReference type="ExpressionAtlas" id="O43760">
    <property type="expression patterns" value="baseline and differential"/>
</dbReference>
<dbReference type="GO" id="GO:0070062">
    <property type="term" value="C:extracellular exosome"/>
    <property type="evidence" value="ECO:0007005"/>
    <property type="project" value="UniProtKB"/>
</dbReference>
<dbReference type="GO" id="GO:0005811">
    <property type="term" value="C:lipid droplet"/>
    <property type="evidence" value="ECO:0007669"/>
    <property type="project" value="UniProtKB-SubCell"/>
</dbReference>
<dbReference type="GO" id="GO:0016020">
    <property type="term" value="C:membrane"/>
    <property type="evidence" value="ECO:0000303"/>
    <property type="project" value="UniProtKB"/>
</dbReference>
<dbReference type="GO" id="GO:0031594">
    <property type="term" value="C:neuromuscular junction"/>
    <property type="evidence" value="ECO:0000318"/>
    <property type="project" value="GO_Central"/>
</dbReference>
<dbReference type="GO" id="GO:0030672">
    <property type="term" value="C:synaptic vesicle membrane"/>
    <property type="evidence" value="ECO:0000250"/>
    <property type="project" value="UniProtKB"/>
</dbReference>
<dbReference type="GO" id="GO:0045055">
    <property type="term" value="P:regulated exocytosis"/>
    <property type="evidence" value="ECO:0000250"/>
    <property type="project" value="UniProtKB"/>
</dbReference>
<dbReference type="GO" id="GO:0048499">
    <property type="term" value="P:synaptic vesicle membrane organization"/>
    <property type="evidence" value="ECO:0000250"/>
    <property type="project" value="UniProtKB"/>
</dbReference>
<dbReference type="InterPro" id="IPR008253">
    <property type="entry name" value="Marvel"/>
</dbReference>
<dbReference type="InterPro" id="IPR016579">
    <property type="entry name" value="Synaptogyrin"/>
</dbReference>
<dbReference type="PANTHER" id="PTHR10838">
    <property type="entry name" value="SYNAPTOGYRIN"/>
    <property type="match status" value="1"/>
</dbReference>
<dbReference type="PANTHER" id="PTHR10838:SF30">
    <property type="entry name" value="SYNAPTOGYRIN-2"/>
    <property type="match status" value="1"/>
</dbReference>
<dbReference type="Pfam" id="PF01284">
    <property type="entry name" value="MARVEL"/>
    <property type="match status" value="1"/>
</dbReference>
<dbReference type="PIRSF" id="PIRSF011282">
    <property type="entry name" value="Synaptogyrin"/>
    <property type="match status" value="1"/>
</dbReference>
<dbReference type="PROSITE" id="PS51225">
    <property type="entry name" value="MARVEL"/>
    <property type="match status" value="1"/>
</dbReference>
<evidence type="ECO:0000250" key="1">
    <source>
        <dbReference type="UniProtKB" id="O54980"/>
    </source>
</evidence>
<evidence type="ECO:0000255" key="2"/>
<evidence type="ECO:0000255" key="3">
    <source>
        <dbReference type="PROSITE-ProRule" id="PRU00581"/>
    </source>
</evidence>
<evidence type="ECO:0000269" key="4">
    <source>
    </source>
</evidence>
<evidence type="ECO:0000269" key="5">
    <source>
    </source>
</evidence>
<evidence type="ECO:0000269" key="6">
    <source ref="5"/>
</evidence>
<evidence type="ECO:0000303" key="7">
    <source>
    </source>
</evidence>
<evidence type="ECO:0000305" key="8"/>
<evidence type="ECO:0000312" key="9">
    <source>
        <dbReference type="EMBL" id="AAQ89275.1"/>
    </source>
</evidence>
<evidence type="ECO:0000312" key="10">
    <source>
        <dbReference type="HGNC" id="HGNC:11499"/>
    </source>
</evidence>
<evidence type="ECO:0007744" key="11">
    <source>
    </source>
</evidence>
<evidence type="ECO:0007744" key="12">
    <source>
    </source>
</evidence>
<evidence type="ECO:0007744" key="13">
    <source>
    </source>
</evidence>
<feature type="chain" id="PRO_0000183993" description="Synaptogyrin-2">
    <location>
        <begin position="1"/>
        <end position="224"/>
    </location>
</feature>
<feature type="transmembrane region" description="Helical" evidence="2">
    <location>
        <begin position="26"/>
        <end position="46"/>
    </location>
</feature>
<feature type="transmembrane region" description="Helical" evidence="2">
    <location>
        <begin position="73"/>
        <end position="93"/>
    </location>
</feature>
<feature type="transmembrane region" description="Helical" evidence="2">
    <location>
        <begin position="105"/>
        <end position="125"/>
    </location>
</feature>
<feature type="transmembrane region" description="Helical" evidence="2">
    <location>
        <begin position="147"/>
        <end position="167"/>
    </location>
</feature>
<feature type="domain" description="MARVEL" evidence="3">
    <location>
        <begin position="20"/>
        <end position="171"/>
    </location>
</feature>
<feature type="modified residue" description="N-acetylmethionine" evidence="6 11 12">
    <location>
        <position position="1"/>
    </location>
</feature>
<feature type="modified residue" description="Phosphoserine" evidence="13">
    <location>
        <position position="3"/>
    </location>
</feature>
<feature type="splice variant" id="VSP_056179" description="In isoform 2." evidence="7">
    <original>GVLASLAYQRYKAGVDDFIQNYVDPTPDPNTAYASYPGASVDNYQQPPFTQNAETTEGYQPPPVY</original>
    <variation>VGWPGAGSWVKGGGGWGPPPTCTLLCSPCRVCWPPWPTSATRLAWTTSSRITLTPLRTPTLPTPPTQVHLWTTTNSHPSPRTRRPPRATSRPLCTERRLAWEGGQRGPSPLPWTFP</variation>
    <location>
        <begin position="160"/>
        <end position="224"/>
    </location>
</feature>
<feature type="sequence conflict" description="In Ref. 1; CAA05327." evidence="8" ref="1">
    <original>GVL</original>
    <variation>VGW</variation>
    <location>
        <begin position="160"/>
        <end position="162"/>
    </location>
</feature>
<reference key="1">
    <citation type="journal article" date="1998" name="Hum. Genet.">
        <title>Characterization of the human synaptogyrin gene family.</title>
        <authorList>
            <person name="Kedra D."/>
            <person name="Pan H.-Q."/>
            <person name="Seroussi E."/>
            <person name="Fransson I."/>
            <person name="Guilbaud C."/>
            <person name="Collins J.E."/>
            <person name="Dunham I."/>
            <person name="Blennow E."/>
            <person name="Roe B.A."/>
            <person name="Piehl F."/>
            <person name="Dumanski J.P."/>
        </authorList>
    </citation>
    <scope>NUCLEOTIDE SEQUENCE [GENOMIC DNA / MRNA] (ISOFORM 1)</scope>
    <scope>TISSUE SPECIFICITY</scope>
</reference>
<reference key="2">
    <citation type="journal article" date="2003" name="Genome Res.">
        <title>The secreted protein discovery initiative (SPDI), a large-scale effort to identify novel human secreted and transmembrane proteins: a bioinformatics assessment.</title>
        <authorList>
            <person name="Clark H.F."/>
            <person name="Gurney A.L."/>
            <person name="Abaya E."/>
            <person name="Baker K."/>
            <person name="Baldwin D.T."/>
            <person name="Brush J."/>
            <person name="Chen J."/>
            <person name="Chow B."/>
            <person name="Chui C."/>
            <person name="Crowley C."/>
            <person name="Currell B."/>
            <person name="Deuel B."/>
            <person name="Dowd P."/>
            <person name="Eaton D."/>
            <person name="Foster J.S."/>
            <person name="Grimaldi C."/>
            <person name="Gu Q."/>
            <person name="Hass P.E."/>
            <person name="Heldens S."/>
            <person name="Huang A."/>
            <person name="Kim H.S."/>
            <person name="Klimowski L."/>
            <person name="Jin Y."/>
            <person name="Johnson S."/>
            <person name="Lee J."/>
            <person name="Lewis L."/>
            <person name="Liao D."/>
            <person name="Mark M.R."/>
            <person name="Robbie E."/>
            <person name="Sanchez C."/>
            <person name="Schoenfeld J."/>
            <person name="Seshagiri S."/>
            <person name="Simmons L."/>
            <person name="Singh J."/>
            <person name="Smith V."/>
            <person name="Stinson J."/>
            <person name="Vagts A."/>
            <person name="Vandlen R.L."/>
            <person name="Watanabe C."/>
            <person name="Wieand D."/>
            <person name="Woods K."/>
            <person name="Xie M.-H."/>
            <person name="Yansura D.G."/>
            <person name="Yi S."/>
            <person name="Yu G."/>
            <person name="Yuan J."/>
            <person name="Zhang M."/>
            <person name="Zhang Z."/>
            <person name="Goddard A.D."/>
            <person name="Wood W.I."/>
            <person name="Godowski P.J."/>
            <person name="Gray A.M."/>
        </authorList>
    </citation>
    <scope>NUCLEOTIDE SEQUENCE [LARGE SCALE MRNA] (ISOFORM 1)</scope>
</reference>
<reference key="3">
    <citation type="journal article" date="2006" name="Nature">
        <title>DNA sequence of human chromosome 17 and analysis of rearrangement in the human lineage.</title>
        <authorList>
            <person name="Zody M.C."/>
            <person name="Garber M."/>
            <person name="Adams D.J."/>
            <person name="Sharpe T."/>
            <person name="Harrow J."/>
            <person name="Lupski J.R."/>
            <person name="Nicholson C."/>
            <person name="Searle S.M."/>
            <person name="Wilming L."/>
            <person name="Young S.K."/>
            <person name="Abouelleil A."/>
            <person name="Allen N.R."/>
            <person name="Bi W."/>
            <person name="Bloom T."/>
            <person name="Borowsky M.L."/>
            <person name="Bugalter B.E."/>
            <person name="Butler J."/>
            <person name="Chang J.L."/>
            <person name="Chen C.-K."/>
            <person name="Cook A."/>
            <person name="Corum B."/>
            <person name="Cuomo C.A."/>
            <person name="de Jong P.J."/>
            <person name="DeCaprio D."/>
            <person name="Dewar K."/>
            <person name="FitzGerald M."/>
            <person name="Gilbert J."/>
            <person name="Gibson R."/>
            <person name="Gnerre S."/>
            <person name="Goldstein S."/>
            <person name="Grafham D.V."/>
            <person name="Grocock R."/>
            <person name="Hafez N."/>
            <person name="Hagopian D.S."/>
            <person name="Hart E."/>
            <person name="Norman C.H."/>
            <person name="Humphray S."/>
            <person name="Jaffe D.B."/>
            <person name="Jones M."/>
            <person name="Kamal M."/>
            <person name="Khodiyar V.K."/>
            <person name="LaButti K."/>
            <person name="Laird G."/>
            <person name="Lehoczky J."/>
            <person name="Liu X."/>
            <person name="Lokyitsang T."/>
            <person name="Loveland J."/>
            <person name="Lui A."/>
            <person name="Macdonald P."/>
            <person name="Major J.E."/>
            <person name="Matthews L."/>
            <person name="Mauceli E."/>
            <person name="McCarroll S.A."/>
            <person name="Mihalev A.H."/>
            <person name="Mudge J."/>
            <person name="Nguyen C."/>
            <person name="Nicol R."/>
            <person name="O'Leary S.B."/>
            <person name="Osoegawa K."/>
            <person name="Schwartz D.C."/>
            <person name="Shaw-Smith C."/>
            <person name="Stankiewicz P."/>
            <person name="Steward C."/>
            <person name="Swarbreck D."/>
            <person name="Venkataraman V."/>
            <person name="Whittaker C.A."/>
            <person name="Yang X."/>
            <person name="Zimmer A.R."/>
            <person name="Bradley A."/>
            <person name="Hubbard T."/>
            <person name="Birren B.W."/>
            <person name="Rogers J."/>
            <person name="Lander E.S."/>
            <person name="Nusbaum C."/>
        </authorList>
    </citation>
    <scope>NUCLEOTIDE SEQUENCE [LARGE SCALE GENOMIC DNA]</scope>
</reference>
<reference key="4">
    <citation type="journal article" date="2004" name="Genome Res.">
        <title>The status, quality, and expansion of the NIH full-length cDNA project: the Mammalian Gene Collection (MGC).</title>
        <authorList>
            <consortium name="The MGC Project Team"/>
        </authorList>
    </citation>
    <scope>NUCLEOTIDE SEQUENCE [LARGE SCALE MRNA] (ISOFORMS 1 AND 2)</scope>
    <source>
        <tissue>Lung</tissue>
        <tissue>Lymph</tissue>
        <tissue>Skin</tissue>
    </source>
</reference>
<reference key="5">
    <citation type="submission" date="2005-02" db="UniProtKB">
        <authorList>
            <person name="Bienvenut W.V."/>
        </authorList>
    </citation>
    <scope>PROTEIN SEQUENCE OF 1-18</scope>
    <scope>ACETYLATION AT MET-1</scope>
    <scope>IDENTIFICATION BY MASS SPECTROMETRY</scope>
    <source>
        <tissue>B-cell lymphoma</tissue>
    </source>
</reference>
<reference key="6">
    <citation type="journal article" date="2007" name="BMC Genomics">
        <title>The full-ORF clone resource of the German cDNA consortium.</title>
        <authorList>
            <person name="Bechtel S."/>
            <person name="Rosenfelder H."/>
            <person name="Duda A."/>
            <person name="Schmidt C.P."/>
            <person name="Ernst U."/>
            <person name="Wellenreuther R."/>
            <person name="Mehrle A."/>
            <person name="Schuster C."/>
            <person name="Bahr A."/>
            <person name="Bloecker H."/>
            <person name="Heubner D."/>
            <person name="Hoerlein A."/>
            <person name="Michel G."/>
            <person name="Wedler H."/>
            <person name="Koehrer K."/>
            <person name="Ottenwaelder B."/>
            <person name="Poustka A."/>
            <person name="Wiemann S."/>
            <person name="Schupp I."/>
        </authorList>
    </citation>
    <scope>NUCLEOTIDE SEQUENCE [LARGE SCALE MRNA] OF 34-224 (ISOFORM 1)</scope>
    <source>
        <tissue>Stomach</tissue>
    </source>
</reference>
<reference key="7">
    <citation type="journal article" date="2011" name="BMC Syst. Biol.">
        <title>Initial characterization of the human central proteome.</title>
        <authorList>
            <person name="Burkard T.R."/>
            <person name="Planyavsky M."/>
            <person name="Kaupe I."/>
            <person name="Breitwieser F.P."/>
            <person name="Buerckstuemmer T."/>
            <person name="Bennett K.L."/>
            <person name="Superti-Furga G."/>
            <person name="Colinge J."/>
        </authorList>
    </citation>
    <scope>IDENTIFICATION BY MASS SPECTROMETRY [LARGE SCALE ANALYSIS]</scope>
</reference>
<reference key="8">
    <citation type="journal article" date="2012" name="Mol. Cell. Proteomics">
        <title>Comparative large-scale characterisation of plant vs. mammal proteins reveals similar and idiosyncratic N-alpha acetylation features.</title>
        <authorList>
            <person name="Bienvenut W.V."/>
            <person name="Sumpton D."/>
            <person name="Martinez A."/>
            <person name="Lilla S."/>
            <person name="Espagne C."/>
            <person name="Meinnel T."/>
            <person name="Giglione C."/>
        </authorList>
    </citation>
    <scope>ACETYLATION [LARGE SCALE ANALYSIS] AT MET-1</scope>
    <scope>IDENTIFICATION BY MASS SPECTROMETRY [LARGE SCALE ANALYSIS]</scope>
</reference>
<reference key="9">
    <citation type="journal article" date="2012" name="Proc. Natl. Acad. Sci. U.S.A.">
        <title>N-terminal acetylome analyses and functional insights of the N-terminal acetyltransferase NatB.</title>
        <authorList>
            <person name="Van Damme P."/>
            <person name="Lasa M."/>
            <person name="Polevoda B."/>
            <person name="Gazquez C."/>
            <person name="Elosegui-Artola A."/>
            <person name="Kim D.S."/>
            <person name="De Juan-Pardo E."/>
            <person name="Demeyer K."/>
            <person name="Hole K."/>
            <person name="Larrea E."/>
            <person name="Timmerman E."/>
            <person name="Prieto J."/>
            <person name="Arnesen T."/>
            <person name="Sherman F."/>
            <person name="Gevaert K."/>
            <person name="Aldabe R."/>
        </authorList>
    </citation>
    <scope>ACETYLATION [LARGE SCALE ANALYSIS] AT MET-1</scope>
    <scope>IDENTIFICATION BY MASS SPECTROMETRY [LARGE SCALE ANALYSIS]</scope>
</reference>
<reference key="10">
    <citation type="journal article" date="2013" name="J. Proteome Res.">
        <title>Toward a comprehensive characterization of a human cancer cell phosphoproteome.</title>
        <authorList>
            <person name="Zhou H."/>
            <person name="Di Palma S."/>
            <person name="Preisinger C."/>
            <person name="Peng M."/>
            <person name="Polat A.N."/>
            <person name="Heck A.J."/>
            <person name="Mohammed S."/>
        </authorList>
    </citation>
    <scope>PHOSPHORYLATION [LARGE SCALE ANALYSIS] AT SER-3</scope>
    <scope>IDENTIFICATION BY MASS SPECTROMETRY [LARGE SCALE ANALYSIS]</scope>
    <source>
        <tissue>Cervix carcinoma</tissue>
        <tissue>Erythroleukemia</tissue>
    </source>
</reference>
<reference key="11">
    <citation type="journal article" date="2016" name="J. Biol. Chem.">
        <title>Synaptogyrin-2 promotes replication of a novel tick-borne bunyavirus through interacting with viral nonstructural protein NSs.</title>
        <authorList>
            <person name="Sun Q."/>
            <person name="Qi X."/>
            <person name="Zhang Y."/>
            <person name="Wu X."/>
            <person name="Liang M."/>
            <person name="Li C."/>
            <person name="Li D."/>
            <person name="Cardona C.J."/>
            <person name="Xing Z."/>
        </authorList>
    </citation>
    <scope>FUNCTION (MICROBIAL INFECTION)</scope>
    <scope>INTERACTION WITH SFTS PHLEBOVIRUS NNS PROTEIN (MICROBIAL INFECTION)</scope>
    <scope>SUBCELLULAR LOCATION (MICROBIAL INFECTION)</scope>
    <scope>INDUCTION BY SFTS PHLEBOVIRUS (MICROBIAL INFECTION)</scope>
</reference>
<protein>
    <recommendedName>
        <fullName evidence="8">Synaptogyrin-2</fullName>
    </recommendedName>
    <alternativeName>
        <fullName evidence="1">Cellugyrin</fullName>
    </alternativeName>
</protein>
<gene>
    <name evidence="10" type="primary">SYNGR2</name>
    <name evidence="9" type="ORF">UNQ352/PRO615</name>
</gene>
<name>SNG2_HUMAN</name>
<keyword id="KW-0007">Acetylation</keyword>
<keyword id="KW-0025">Alternative splicing</keyword>
<keyword id="KW-0968">Cytoplasmic vesicle</keyword>
<keyword id="KW-0903">Direct protein sequencing</keyword>
<keyword id="KW-0945">Host-virus interaction</keyword>
<keyword id="KW-0551">Lipid droplet</keyword>
<keyword id="KW-0472">Membrane</keyword>
<keyword id="KW-0597">Phosphoprotein</keyword>
<keyword id="KW-1267">Proteomics identification</keyword>
<keyword id="KW-1185">Reference proteome</keyword>
<keyword id="KW-0770">Synapse</keyword>
<keyword id="KW-0812">Transmembrane</keyword>
<keyword id="KW-1133">Transmembrane helix</keyword>